<feature type="chain" id="PRO_0000124578" description="Heat shock factor protein">
    <location>
        <begin position="1"/>
        <end position="691"/>
    </location>
</feature>
<feature type="DNA-binding region">
    <location>
        <begin position="46"/>
        <end position="150"/>
    </location>
</feature>
<feature type="region of interest" description="Disordered" evidence="2">
    <location>
        <begin position="1"/>
        <end position="31"/>
    </location>
</feature>
<feature type="region of interest" description="Disordered" evidence="2">
    <location>
        <begin position="288"/>
        <end position="307"/>
    </location>
</feature>
<feature type="region of interest" description="Disordered" evidence="2">
    <location>
        <begin position="658"/>
        <end position="691"/>
    </location>
</feature>
<feature type="compositionally biased region" description="Acidic residues" evidence="2">
    <location>
        <begin position="18"/>
        <end position="27"/>
    </location>
</feature>
<feature type="compositionally biased region" description="Acidic residues" evidence="2">
    <location>
        <begin position="659"/>
        <end position="668"/>
    </location>
</feature>
<feature type="compositionally biased region" description="Polar residues" evidence="2">
    <location>
        <begin position="675"/>
        <end position="685"/>
    </location>
</feature>
<feature type="modified residue" description="Phosphoserine" evidence="3">
    <location>
        <position position="256"/>
    </location>
</feature>
<feature type="modified residue" description="Phosphothreonine" evidence="3">
    <location>
        <position position="258"/>
    </location>
</feature>
<feature type="modified residue" description="Phosphoserine" evidence="3">
    <location>
        <position position="260"/>
    </location>
</feature>
<feature type="modified residue" description="Phosphoserine" evidence="3">
    <location>
        <position position="283"/>
    </location>
</feature>
<feature type="modified residue" description="Phosphoserine" evidence="3">
    <location>
        <position position="299"/>
    </location>
</feature>
<feature type="modified residue" description="Phosphoserine" evidence="3">
    <location>
        <position position="580"/>
    </location>
</feature>
<feature type="helix" evidence="5">
    <location>
        <begin position="50"/>
        <end position="57"/>
    </location>
</feature>
<feature type="strand" evidence="5">
    <location>
        <begin position="58"/>
        <end position="60"/>
    </location>
</feature>
<feature type="turn" evidence="5">
    <location>
        <begin position="61"/>
        <end position="65"/>
    </location>
</feature>
<feature type="strand" evidence="5">
    <location>
        <begin position="66"/>
        <end position="69"/>
    </location>
</feature>
<feature type="turn" evidence="5">
    <location>
        <begin position="70"/>
        <end position="72"/>
    </location>
</feature>
<feature type="strand" evidence="6">
    <location>
        <begin position="74"/>
        <end position="76"/>
    </location>
</feature>
<feature type="turn" evidence="5">
    <location>
        <begin position="82"/>
        <end position="87"/>
    </location>
</feature>
<feature type="turn" evidence="5">
    <location>
        <begin position="89"/>
        <end position="92"/>
    </location>
</feature>
<feature type="helix" evidence="5">
    <location>
        <begin position="97"/>
        <end position="107"/>
    </location>
</feature>
<feature type="strand" evidence="5">
    <location>
        <begin position="115"/>
        <end position="117"/>
    </location>
</feature>
<feature type="strand" evidence="6">
    <location>
        <begin position="128"/>
        <end position="130"/>
    </location>
</feature>
<feature type="turn" evidence="5">
    <location>
        <begin position="142"/>
        <end position="144"/>
    </location>
</feature>
<reference key="1">
    <citation type="journal article" date="1990" name="Cell">
        <title>Molecular cloning and expression of a hexameric Drosophila heat shock factor subject to negative regulation.</title>
        <authorList>
            <person name="Clos J."/>
            <person name="Westwood J.T."/>
            <person name="Becker P.B."/>
            <person name="Wilson S."/>
            <person name="Lambert K."/>
            <person name="Wu C."/>
        </authorList>
    </citation>
    <scope>NUCLEOTIDE SEQUENCE [MRNA]</scope>
    <scope>PARTIAL PROTEIN SEQUENCE</scope>
</reference>
<reference key="2">
    <citation type="journal article" date="2000" name="Science">
        <title>The genome sequence of Drosophila melanogaster.</title>
        <authorList>
            <person name="Adams M.D."/>
            <person name="Celniker S.E."/>
            <person name="Holt R.A."/>
            <person name="Evans C.A."/>
            <person name="Gocayne J.D."/>
            <person name="Amanatides P.G."/>
            <person name="Scherer S.E."/>
            <person name="Li P.W."/>
            <person name="Hoskins R.A."/>
            <person name="Galle R.F."/>
            <person name="George R.A."/>
            <person name="Lewis S.E."/>
            <person name="Richards S."/>
            <person name="Ashburner M."/>
            <person name="Henderson S.N."/>
            <person name="Sutton G.G."/>
            <person name="Wortman J.R."/>
            <person name="Yandell M.D."/>
            <person name="Zhang Q."/>
            <person name="Chen L.X."/>
            <person name="Brandon R.C."/>
            <person name="Rogers Y.-H.C."/>
            <person name="Blazej R.G."/>
            <person name="Champe M."/>
            <person name="Pfeiffer B.D."/>
            <person name="Wan K.H."/>
            <person name="Doyle C."/>
            <person name="Baxter E.G."/>
            <person name="Helt G."/>
            <person name="Nelson C.R."/>
            <person name="Miklos G.L.G."/>
            <person name="Abril J.F."/>
            <person name="Agbayani A."/>
            <person name="An H.-J."/>
            <person name="Andrews-Pfannkoch C."/>
            <person name="Baldwin D."/>
            <person name="Ballew R.M."/>
            <person name="Basu A."/>
            <person name="Baxendale J."/>
            <person name="Bayraktaroglu L."/>
            <person name="Beasley E.M."/>
            <person name="Beeson K.Y."/>
            <person name="Benos P.V."/>
            <person name="Berman B.P."/>
            <person name="Bhandari D."/>
            <person name="Bolshakov S."/>
            <person name="Borkova D."/>
            <person name="Botchan M.R."/>
            <person name="Bouck J."/>
            <person name="Brokstein P."/>
            <person name="Brottier P."/>
            <person name="Burtis K.C."/>
            <person name="Busam D.A."/>
            <person name="Butler H."/>
            <person name="Cadieu E."/>
            <person name="Center A."/>
            <person name="Chandra I."/>
            <person name="Cherry J.M."/>
            <person name="Cawley S."/>
            <person name="Dahlke C."/>
            <person name="Davenport L.B."/>
            <person name="Davies P."/>
            <person name="de Pablos B."/>
            <person name="Delcher A."/>
            <person name="Deng Z."/>
            <person name="Mays A.D."/>
            <person name="Dew I."/>
            <person name="Dietz S.M."/>
            <person name="Dodson K."/>
            <person name="Doup L.E."/>
            <person name="Downes M."/>
            <person name="Dugan-Rocha S."/>
            <person name="Dunkov B.C."/>
            <person name="Dunn P."/>
            <person name="Durbin K.J."/>
            <person name="Evangelista C.C."/>
            <person name="Ferraz C."/>
            <person name="Ferriera S."/>
            <person name="Fleischmann W."/>
            <person name="Fosler C."/>
            <person name="Gabrielian A.E."/>
            <person name="Garg N.S."/>
            <person name="Gelbart W.M."/>
            <person name="Glasser K."/>
            <person name="Glodek A."/>
            <person name="Gong F."/>
            <person name="Gorrell J.H."/>
            <person name="Gu Z."/>
            <person name="Guan P."/>
            <person name="Harris M."/>
            <person name="Harris N.L."/>
            <person name="Harvey D.A."/>
            <person name="Heiman T.J."/>
            <person name="Hernandez J.R."/>
            <person name="Houck J."/>
            <person name="Hostin D."/>
            <person name="Houston K.A."/>
            <person name="Howland T.J."/>
            <person name="Wei M.-H."/>
            <person name="Ibegwam C."/>
            <person name="Jalali M."/>
            <person name="Kalush F."/>
            <person name="Karpen G.H."/>
            <person name="Ke Z."/>
            <person name="Kennison J.A."/>
            <person name="Ketchum K.A."/>
            <person name="Kimmel B.E."/>
            <person name="Kodira C.D."/>
            <person name="Kraft C.L."/>
            <person name="Kravitz S."/>
            <person name="Kulp D."/>
            <person name="Lai Z."/>
            <person name="Lasko P."/>
            <person name="Lei Y."/>
            <person name="Levitsky A.A."/>
            <person name="Li J.H."/>
            <person name="Li Z."/>
            <person name="Liang Y."/>
            <person name="Lin X."/>
            <person name="Liu X."/>
            <person name="Mattei B."/>
            <person name="McIntosh T.C."/>
            <person name="McLeod M.P."/>
            <person name="McPherson D."/>
            <person name="Merkulov G."/>
            <person name="Milshina N.V."/>
            <person name="Mobarry C."/>
            <person name="Morris J."/>
            <person name="Moshrefi A."/>
            <person name="Mount S.M."/>
            <person name="Moy M."/>
            <person name="Murphy B."/>
            <person name="Murphy L."/>
            <person name="Muzny D.M."/>
            <person name="Nelson D.L."/>
            <person name="Nelson D.R."/>
            <person name="Nelson K.A."/>
            <person name="Nixon K."/>
            <person name="Nusskern D.R."/>
            <person name="Pacleb J.M."/>
            <person name="Palazzolo M."/>
            <person name="Pittman G.S."/>
            <person name="Pan S."/>
            <person name="Pollard J."/>
            <person name="Puri V."/>
            <person name="Reese M.G."/>
            <person name="Reinert K."/>
            <person name="Remington K."/>
            <person name="Saunders R.D.C."/>
            <person name="Scheeler F."/>
            <person name="Shen H."/>
            <person name="Shue B.C."/>
            <person name="Siden-Kiamos I."/>
            <person name="Simpson M."/>
            <person name="Skupski M.P."/>
            <person name="Smith T.J."/>
            <person name="Spier E."/>
            <person name="Spradling A.C."/>
            <person name="Stapleton M."/>
            <person name="Strong R."/>
            <person name="Sun E."/>
            <person name="Svirskas R."/>
            <person name="Tector C."/>
            <person name="Turner R."/>
            <person name="Venter E."/>
            <person name="Wang A.H."/>
            <person name="Wang X."/>
            <person name="Wang Z.-Y."/>
            <person name="Wassarman D.A."/>
            <person name="Weinstock G.M."/>
            <person name="Weissenbach J."/>
            <person name="Williams S.M."/>
            <person name="Woodage T."/>
            <person name="Worley K.C."/>
            <person name="Wu D."/>
            <person name="Yang S."/>
            <person name="Yao Q.A."/>
            <person name="Ye J."/>
            <person name="Yeh R.-F."/>
            <person name="Zaveri J.S."/>
            <person name="Zhan M."/>
            <person name="Zhang G."/>
            <person name="Zhao Q."/>
            <person name="Zheng L."/>
            <person name="Zheng X.H."/>
            <person name="Zhong F.N."/>
            <person name="Zhong W."/>
            <person name="Zhou X."/>
            <person name="Zhu S.C."/>
            <person name="Zhu X."/>
            <person name="Smith H.O."/>
            <person name="Gibbs R.A."/>
            <person name="Myers E.W."/>
            <person name="Rubin G.M."/>
            <person name="Venter J.C."/>
        </authorList>
    </citation>
    <scope>NUCLEOTIDE SEQUENCE [LARGE SCALE GENOMIC DNA]</scope>
    <source>
        <strain>Berkeley</strain>
    </source>
</reference>
<reference key="3">
    <citation type="journal article" date="2002" name="Genome Biol.">
        <title>Annotation of the Drosophila melanogaster euchromatic genome: a systematic review.</title>
        <authorList>
            <person name="Misra S."/>
            <person name="Crosby M.A."/>
            <person name="Mungall C.J."/>
            <person name="Matthews B.B."/>
            <person name="Campbell K.S."/>
            <person name="Hradecky P."/>
            <person name="Huang Y."/>
            <person name="Kaminker J.S."/>
            <person name="Millburn G.H."/>
            <person name="Prochnik S.E."/>
            <person name="Smith C.D."/>
            <person name="Tupy J.L."/>
            <person name="Whitfield E.J."/>
            <person name="Bayraktaroglu L."/>
            <person name="Berman B.P."/>
            <person name="Bettencourt B.R."/>
            <person name="Celniker S.E."/>
            <person name="de Grey A.D.N.J."/>
            <person name="Drysdale R.A."/>
            <person name="Harris N.L."/>
            <person name="Richter J."/>
            <person name="Russo S."/>
            <person name="Schroeder A.J."/>
            <person name="Shu S.Q."/>
            <person name="Stapleton M."/>
            <person name="Yamada C."/>
            <person name="Ashburner M."/>
            <person name="Gelbart W.M."/>
            <person name="Rubin G.M."/>
            <person name="Lewis S.E."/>
        </authorList>
    </citation>
    <scope>GENOME REANNOTATION</scope>
    <source>
        <strain>Berkeley</strain>
    </source>
</reference>
<reference key="4">
    <citation type="journal article" date="2008" name="J. Proteome Res.">
        <title>Phosphoproteome analysis of Drosophila melanogaster embryos.</title>
        <authorList>
            <person name="Zhai B."/>
            <person name="Villen J."/>
            <person name="Beausoleil S.A."/>
            <person name="Mintseris J."/>
            <person name="Gygi S.P."/>
        </authorList>
    </citation>
    <scope>PHOSPHORYLATION [LARGE SCALE ANALYSIS] AT SER-256; THR-258; SER-260; SER-283; SER-299 AND SER-580</scope>
    <scope>IDENTIFICATION BY MASS SPECTROMETRY</scope>
    <source>
        <tissue>Embryo</tissue>
    </source>
</reference>
<reference key="5">
    <citation type="journal article" date="1994" name="Nat. Struct. Biol.">
        <title>Solution structure of the DNA-binding domain of Drosophila heat shock transcription factor.</title>
        <authorList>
            <person name="Vuister G.W."/>
            <person name="Kim S.-J."/>
            <person name="Orosz A."/>
            <person name="Marquardt J."/>
            <person name="Wu C."/>
            <person name="Bax A."/>
        </authorList>
    </citation>
    <scope>STRUCTURE BY NMR OF 43-150</scope>
</reference>
<proteinExistence type="evidence at protein level"/>
<organism>
    <name type="scientific">Drosophila melanogaster</name>
    <name type="common">Fruit fly</name>
    <dbReference type="NCBI Taxonomy" id="7227"/>
    <lineage>
        <taxon>Eukaryota</taxon>
        <taxon>Metazoa</taxon>
        <taxon>Ecdysozoa</taxon>
        <taxon>Arthropoda</taxon>
        <taxon>Hexapoda</taxon>
        <taxon>Insecta</taxon>
        <taxon>Pterygota</taxon>
        <taxon>Neoptera</taxon>
        <taxon>Endopterygota</taxon>
        <taxon>Diptera</taxon>
        <taxon>Brachycera</taxon>
        <taxon>Muscomorpha</taxon>
        <taxon>Ephydroidea</taxon>
        <taxon>Drosophilidae</taxon>
        <taxon>Drosophila</taxon>
        <taxon>Sophophora</taxon>
    </lineage>
</organism>
<comment type="function">
    <text>DNA-binding protein that specifically binds heat shock promoter elements (HSE) and activates transcription. In higher eukaryotes, HSF is unable to bind to the HSE unless the cells are heat shocked.</text>
</comment>
<comment type="subunit">
    <text>Homotrimer.</text>
</comment>
<comment type="interaction">
    <interactant intactId="EBI-130048">
        <id>P22813</id>
    </interactant>
    <interactant intactId="EBI-130048">
        <id>P22813</id>
        <label>Hsf</label>
    </interactant>
    <organismsDiffer>false</organismsDiffer>
    <experiments>3</experiments>
</comment>
<comment type="subcellular location">
    <subcellularLocation>
        <location>Nucleus</location>
    </subcellularLocation>
</comment>
<comment type="PTM">
    <text evidence="1">Exhibits temperature-dependent phosphorylation.</text>
</comment>
<comment type="similarity">
    <text evidence="4">Belongs to the HSF family.</text>
</comment>
<protein>
    <recommendedName>
        <fullName>Heat shock factor protein</fullName>
        <shortName>HSF</shortName>
    </recommendedName>
    <alternativeName>
        <fullName>Heat shock transcription factor</fullName>
        <shortName>HSTF</shortName>
    </alternativeName>
</protein>
<dbReference type="EMBL" id="M60070">
    <property type="protein sequence ID" value="AAA28642.1"/>
    <property type="molecule type" value="mRNA"/>
</dbReference>
<dbReference type="EMBL" id="AE013599">
    <property type="protein sequence ID" value="AAF57749.1"/>
    <property type="molecule type" value="Genomic_DNA"/>
</dbReference>
<dbReference type="PIR" id="A36295">
    <property type="entry name" value="A36295"/>
</dbReference>
<dbReference type="RefSeq" id="NP_476575.1">
    <property type="nucleotide sequence ID" value="NM_057227.5"/>
</dbReference>
<dbReference type="PDB" id="1HKS">
    <property type="method" value="NMR"/>
    <property type="chains" value="A=43-148"/>
</dbReference>
<dbReference type="PDB" id="1HKT">
    <property type="method" value="NMR"/>
    <property type="chains" value="A=43-148"/>
</dbReference>
<dbReference type="PDBsum" id="1HKS"/>
<dbReference type="PDBsum" id="1HKT"/>
<dbReference type="BMRB" id="P22813"/>
<dbReference type="SMR" id="P22813"/>
<dbReference type="BioGRID" id="62751">
    <property type="interactions" value="22"/>
</dbReference>
<dbReference type="DIP" id="DIP-20041N"/>
<dbReference type="FunCoup" id="P22813">
    <property type="interactions" value="198"/>
</dbReference>
<dbReference type="IntAct" id="P22813">
    <property type="interactions" value="5"/>
</dbReference>
<dbReference type="MINT" id="P22813"/>
<dbReference type="STRING" id="7227.FBpp0110266"/>
<dbReference type="iPTMnet" id="P22813"/>
<dbReference type="PaxDb" id="7227-FBpp0110266"/>
<dbReference type="EnsemblMetazoa" id="FBtr0086782">
    <property type="protein sequence ID" value="FBpp0085961"/>
    <property type="gene ID" value="FBgn0001222"/>
</dbReference>
<dbReference type="GeneID" id="37068"/>
<dbReference type="KEGG" id="dme:Dmel_CG5748"/>
<dbReference type="AGR" id="FB:FBgn0001222"/>
<dbReference type="CTD" id="37068"/>
<dbReference type="FlyBase" id="FBgn0001222">
    <property type="gene designation" value="Hsf"/>
</dbReference>
<dbReference type="VEuPathDB" id="VectorBase:FBgn0001222"/>
<dbReference type="eggNOG" id="KOG0627">
    <property type="taxonomic scope" value="Eukaryota"/>
</dbReference>
<dbReference type="HOGENOM" id="CLU_025761_0_0_1"/>
<dbReference type="InParanoid" id="P22813"/>
<dbReference type="OrthoDB" id="60033at2759"/>
<dbReference type="PhylomeDB" id="P22813"/>
<dbReference type="Reactome" id="R-DME-3371453">
    <property type="pathway name" value="Regulation of HSF1-mediated heat shock response"/>
</dbReference>
<dbReference type="Reactome" id="R-DME-3371511">
    <property type="pathway name" value="HSF1 activation"/>
</dbReference>
<dbReference type="Reactome" id="R-DME-3371568">
    <property type="pathway name" value="Attenuation phase"/>
</dbReference>
<dbReference type="Reactome" id="R-DME-3371571">
    <property type="pathway name" value="HSF1-dependent transactivation"/>
</dbReference>
<dbReference type="Reactome" id="R-DME-9841251">
    <property type="pathway name" value="Mitochondrial unfolded protein response (UPRmt)"/>
</dbReference>
<dbReference type="SignaLink" id="P22813"/>
<dbReference type="BioGRID-ORCS" id="37068">
    <property type="hits" value="0 hits in 3 CRISPR screens"/>
</dbReference>
<dbReference type="EvolutionaryTrace" id="P22813"/>
<dbReference type="GenomeRNAi" id="37068"/>
<dbReference type="PRO" id="PR:P22813"/>
<dbReference type="Proteomes" id="UP000000803">
    <property type="component" value="Chromosome 2R"/>
</dbReference>
<dbReference type="Bgee" id="FBgn0001222">
    <property type="expression patterns" value="Expressed in distal medullary amacrine neuron Dm11 in insect head and 207 other cell types or tissues"/>
</dbReference>
<dbReference type="ExpressionAtlas" id="P22813">
    <property type="expression patterns" value="baseline and differential"/>
</dbReference>
<dbReference type="GO" id="GO:0000785">
    <property type="term" value="C:chromatin"/>
    <property type="evidence" value="ECO:0000314"/>
    <property type="project" value="FlyBase"/>
</dbReference>
<dbReference type="GO" id="GO:0005634">
    <property type="term" value="C:nucleus"/>
    <property type="evidence" value="ECO:0000314"/>
    <property type="project" value="FlyBase"/>
</dbReference>
<dbReference type="GO" id="GO:0005700">
    <property type="term" value="C:polytene chromosome"/>
    <property type="evidence" value="ECO:0000314"/>
    <property type="project" value="FlyBase"/>
</dbReference>
<dbReference type="GO" id="GO:0003677">
    <property type="term" value="F:DNA binding"/>
    <property type="evidence" value="ECO:0000314"/>
    <property type="project" value="FlyBase"/>
</dbReference>
<dbReference type="GO" id="GO:0003700">
    <property type="term" value="F:DNA-binding transcription factor activity"/>
    <property type="evidence" value="ECO:0000314"/>
    <property type="project" value="FlyBase"/>
</dbReference>
<dbReference type="GO" id="GO:0042802">
    <property type="term" value="F:identical protein binding"/>
    <property type="evidence" value="ECO:0000353"/>
    <property type="project" value="IntAct"/>
</dbReference>
<dbReference type="GO" id="GO:0043565">
    <property type="term" value="F:sequence-specific DNA binding"/>
    <property type="evidence" value="ECO:0000314"/>
    <property type="project" value="FlyBase"/>
</dbReference>
<dbReference type="GO" id="GO:0042742">
    <property type="term" value="P:defense response to bacterium"/>
    <property type="evidence" value="ECO:0000315"/>
    <property type="project" value="FlyBase"/>
</dbReference>
<dbReference type="GO" id="GO:0050832">
    <property type="term" value="P:defense response to fungus"/>
    <property type="evidence" value="ECO:0000315"/>
    <property type="project" value="FlyBase"/>
</dbReference>
<dbReference type="GO" id="GO:0045892">
    <property type="term" value="P:negative regulation of DNA-templated transcription"/>
    <property type="evidence" value="ECO:0000315"/>
    <property type="project" value="FlyBase"/>
</dbReference>
<dbReference type="GO" id="GO:0045893">
    <property type="term" value="P:positive regulation of DNA-templated transcription"/>
    <property type="evidence" value="ECO:0000315"/>
    <property type="project" value="FlyBase"/>
</dbReference>
<dbReference type="GO" id="GO:0045944">
    <property type="term" value="P:positive regulation of transcription by RNA polymerase II"/>
    <property type="evidence" value="ECO:0000314"/>
    <property type="project" value="FlyBase"/>
</dbReference>
<dbReference type="GO" id="GO:0009408">
    <property type="term" value="P:response to heat"/>
    <property type="evidence" value="ECO:0000314"/>
    <property type="project" value="FlyBase"/>
</dbReference>
<dbReference type="FunFam" id="1.10.10.10:FF:000027">
    <property type="entry name" value="Heat shock transcription factor 1"/>
    <property type="match status" value="1"/>
</dbReference>
<dbReference type="Gene3D" id="1.10.10.10">
    <property type="entry name" value="Winged helix-like DNA-binding domain superfamily/Winged helix DNA-binding domain"/>
    <property type="match status" value="1"/>
</dbReference>
<dbReference type="InterPro" id="IPR000232">
    <property type="entry name" value="HSF_DNA-bd"/>
</dbReference>
<dbReference type="InterPro" id="IPR010542">
    <property type="entry name" value="Vert_HSTF_C"/>
</dbReference>
<dbReference type="InterPro" id="IPR036388">
    <property type="entry name" value="WH-like_DNA-bd_sf"/>
</dbReference>
<dbReference type="InterPro" id="IPR036390">
    <property type="entry name" value="WH_DNA-bd_sf"/>
</dbReference>
<dbReference type="PANTHER" id="PTHR10015:SF427">
    <property type="entry name" value="HEAT SHOCK FACTOR PROTEIN"/>
    <property type="match status" value="1"/>
</dbReference>
<dbReference type="PANTHER" id="PTHR10015">
    <property type="entry name" value="HEAT SHOCK TRANSCRIPTION FACTOR"/>
    <property type="match status" value="1"/>
</dbReference>
<dbReference type="Pfam" id="PF00447">
    <property type="entry name" value="HSF_DNA-bind"/>
    <property type="match status" value="1"/>
</dbReference>
<dbReference type="Pfam" id="PF06546">
    <property type="entry name" value="Vert_HS_TF"/>
    <property type="match status" value="1"/>
</dbReference>
<dbReference type="PRINTS" id="PR00056">
    <property type="entry name" value="HSFDOMAIN"/>
</dbReference>
<dbReference type="SMART" id="SM00415">
    <property type="entry name" value="HSF"/>
    <property type="match status" value="1"/>
</dbReference>
<dbReference type="SUPFAM" id="SSF46785">
    <property type="entry name" value="Winged helix' DNA-binding domain"/>
    <property type="match status" value="1"/>
</dbReference>
<dbReference type="PROSITE" id="PS00434">
    <property type="entry name" value="HSF_DOMAIN"/>
    <property type="match status" value="1"/>
</dbReference>
<gene>
    <name type="primary">Hsf</name>
    <name type="ORF">CG5748</name>
</gene>
<accession>P22813</accession>
<accession>Q9V8C1</accession>
<name>HSF_DROME</name>
<evidence type="ECO:0000250" key="1"/>
<evidence type="ECO:0000256" key="2">
    <source>
        <dbReference type="SAM" id="MobiDB-lite"/>
    </source>
</evidence>
<evidence type="ECO:0000269" key="3">
    <source>
    </source>
</evidence>
<evidence type="ECO:0000305" key="4"/>
<evidence type="ECO:0007829" key="5">
    <source>
        <dbReference type="PDB" id="1HKS"/>
    </source>
</evidence>
<evidence type="ECO:0007829" key="6">
    <source>
        <dbReference type="PDB" id="1HKT"/>
    </source>
</evidence>
<keyword id="KW-0002">3D-structure</keyword>
<keyword id="KW-0010">Activator</keyword>
<keyword id="KW-0903">Direct protein sequencing</keyword>
<keyword id="KW-0238">DNA-binding</keyword>
<keyword id="KW-0539">Nucleus</keyword>
<keyword id="KW-0597">Phosphoprotein</keyword>
<keyword id="KW-1185">Reference proteome</keyword>
<keyword id="KW-0346">Stress response</keyword>
<keyword id="KW-0804">Transcription</keyword>
<keyword id="KW-0805">Transcription regulation</keyword>
<sequence>MSRSRSSAKAVQFKHESEEEEEDEEEQLPSRRMHSYGDAAAIGSGVPAFLAKLWRLVDDADTNRLICWTKDGQSFVIQNQAQFAKELLPLNYKHNNMASFIRQLNMYGFHKITSIDNGGLRFDRDEIEFSHPFFKRNSPFLLDQIKRKISNNKNGDDKGVLKPEAMSKILTDVKVMRGRQDNLDSRFSAMKQENEVLWREIASLRQKHAKQQQIVNKLIQFLITIVQPSRNMSGVKRHVQLMINNTPEIDRARTTSETESESGGGPVIHELREELLDEVMNPSPAGYTAASHYDQESVSPPAVERPRSNMSISSHNVDYSNQSVEDLLLQGNGTAGGNILVGGAASPMAQSVSQSPAQHDVYTVTEAPDSHVQEVPNSPPYYEEQNVLTTPMVREQEQQKRQQLKENNKLRRQAGDVILDAGDILVDSSSPKAQRTSIQHSTQPDVMVQPMIIKSEPENSSGLMDLMTPANDLYSVNFISEDMPTDIFEDALLPDGVEEAAKLDQQQKFGQSTVSSGKFASNFDVPTNSTLLDANQASTSKAAAKAQASEEEGMAVAKYSGAENGNNRDTNNSQLLRMASVDELHGHLESMQDELETLKDLLRGDGVAIDQNMLMGLFNDSDLMDNYGLSFPNDSISSEKKAPSGSELISYQPMYDLSDILDTDDGNNDQEASRRQMQTQSSVLNTPRHEL</sequence>